<proteinExistence type="inferred from homology"/>
<dbReference type="EC" id="2.3.3.13" evidence="1"/>
<dbReference type="EMBL" id="BA000037">
    <property type="protein sequence ID" value="BAC93251.1"/>
    <property type="molecule type" value="Genomic_DNA"/>
</dbReference>
<dbReference type="RefSeq" id="WP_011078733.1">
    <property type="nucleotide sequence ID" value="NC_005139.1"/>
</dbReference>
<dbReference type="SMR" id="Q7MP77"/>
<dbReference type="STRING" id="672.VV93_v1c04550"/>
<dbReference type="KEGG" id="vvy:VV0487"/>
<dbReference type="PATRIC" id="fig|196600.6.peg.513"/>
<dbReference type="eggNOG" id="COG0119">
    <property type="taxonomic scope" value="Bacteria"/>
</dbReference>
<dbReference type="HOGENOM" id="CLU_022158_0_1_6"/>
<dbReference type="UniPathway" id="UPA00048">
    <property type="reaction ID" value="UER00070"/>
</dbReference>
<dbReference type="Proteomes" id="UP000002675">
    <property type="component" value="Chromosome I"/>
</dbReference>
<dbReference type="GO" id="GO:0005829">
    <property type="term" value="C:cytosol"/>
    <property type="evidence" value="ECO:0007669"/>
    <property type="project" value="TreeGrafter"/>
</dbReference>
<dbReference type="GO" id="GO:0003852">
    <property type="term" value="F:2-isopropylmalate synthase activity"/>
    <property type="evidence" value="ECO:0007669"/>
    <property type="project" value="UniProtKB-UniRule"/>
</dbReference>
<dbReference type="GO" id="GO:0003985">
    <property type="term" value="F:acetyl-CoA C-acetyltransferase activity"/>
    <property type="evidence" value="ECO:0007669"/>
    <property type="project" value="UniProtKB-UniRule"/>
</dbReference>
<dbReference type="GO" id="GO:0030145">
    <property type="term" value="F:manganese ion binding"/>
    <property type="evidence" value="ECO:0007669"/>
    <property type="project" value="UniProtKB-UniRule"/>
</dbReference>
<dbReference type="GO" id="GO:0009098">
    <property type="term" value="P:L-leucine biosynthetic process"/>
    <property type="evidence" value="ECO:0007669"/>
    <property type="project" value="UniProtKB-UniRule"/>
</dbReference>
<dbReference type="CDD" id="cd07940">
    <property type="entry name" value="DRE_TIM_IPMS"/>
    <property type="match status" value="1"/>
</dbReference>
<dbReference type="FunFam" id="1.10.238.260:FF:000001">
    <property type="entry name" value="2-isopropylmalate synthase"/>
    <property type="match status" value="1"/>
</dbReference>
<dbReference type="FunFam" id="3.20.20.70:FF:000010">
    <property type="entry name" value="2-isopropylmalate synthase"/>
    <property type="match status" value="1"/>
</dbReference>
<dbReference type="FunFam" id="3.30.160.270:FF:000001">
    <property type="entry name" value="2-isopropylmalate synthase"/>
    <property type="match status" value="1"/>
</dbReference>
<dbReference type="Gene3D" id="1.10.238.260">
    <property type="match status" value="1"/>
</dbReference>
<dbReference type="Gene3D" id="3.30.160.270">
    <property type="match status" value="1"/>
</dbReference>
<dbReference type="Gene3D" id="3.20.20.70">
    <property type="entry name" value="Aldolase class I"/>
    <property type="match status" value="1"/>
</dbReference>
<dbReference type="HAMAP" id="MF_01025">
    <property type="entry name" value="LeuA_type1"/>
    <property type="match status" value="1"/>
</dbReference>
<dbReference type="InterPro" id="IPR050073">
    <property type="entry name" value="2-IPM_HCS-like"/>
</dbReference>
<dbReference type="InterPro" id="IPR013709">
    <property type="entry name" value="2-isopropylmalate_synth_dimer"/>
</dbReference>
<dbReference type="InterPro" id="IPR002034">
    <property type="entry name" value="AIPM/Hcit_synth_CS"/>
</dbReference>
<dbReference type="InterPro" id="IPR013785">
    <property type="entry name" value="Aldolase_TIM"/>
</dbReference>
<dbReference type="InterPro" id="IPR054691">
    <property type="entry name" value="LeuA/HCS_post-cat"/>
</dbReference>
<dbReference type="InterPro" id="IPR036230">
    <property type="entry name" value="LeuA_allosteric_dom_sf"/>
</dbReference>
<dbReference type="InterPro" id="IPR005671">
    <property type="entry name" value="LeuA_bact_synth"/>
</dbReference>
<dbReference type="InterPro" id="IPR000891">
    <property type="entry name" value="PYR_CT"/>
</dbReference>
<dbReference type="NCBIfam" id="TIGR00973">
    <property type="entry name" value="leuA_bact"/>
    <property type="match status" value="1"/>
</dbReference>
<dbReference type="NCBIfam" id="NF002084">
    <property type="entry name" value="PRK00915.1-1"/>
    <property type="match status" value="1"/>
</dbReference>
<dbReference type="NCBIfam" id="NF002086">
    <property type="entry name" value="PRK00915.1-3"/>
    <property type="match status" value="1"/>
</dbReference>
<dbReference type="PANTHER" id="PTHR10277:SF9">
    <property type="entry name" value="2-ISOPROPYLMALATE SYNTHASE 1, CHLOROPLASTIC-RELATED"/>
    <property type="match status" value="1"/>
</dbReference>
<dbReference type="PANTHER" id="PTHR10277">
    <property type="entry name" value="HOMOCITRATE SYNTHASE-RELATED"/>
    <property type="match status" value="1"/>
</dbReference>
<dbReference type="Pfam" id="PF22617">
    <property type="entry name" value="HCS_D2"/>
    <property type="match status" value="1"/>
</dbReference>
<dbReference type="Pfam" id="PF00682">
    <property type="entry name" value="HMGL-like"/>
    <property type="match status" value="1"/>
</dbReference>
<dbReference type="Pfam" id="PF08502">
    <property type="entry name" value="LeuA_dimer"/>
    <property type="match status" value="1"/>
</dbReference>
<dbReference type="SMART" id="SM00917">
    <property type="entry name" value="LeuA_dimer"/>
    <property type="match status" value="1"/>
</dbReference>
<dbReference type="SUPFAM" id="SSF110921">
    <property type="entry name" value="2-isopropylmalate synthase LeuA, allosteric (dimerisation) domain"/>
    <property type="match status" value="1"/>
</dbReference>
<dbReference type="SUPFAM" id="SSF51569">
    <property type="entry name" value="Aldolase"/>
    <property type="match status" value="1"/>
</dbReference>
<dbReference type="PROSITE" id="PS00815">
    <property type="entry name" value="AIPM_HOMOCIT_SYNTH_1"/>
    <property type="match status" value="1"/>
</dbReference>
<dbReference type="PROSITE" id="PS00816">
    <property type="entry name" value="AIPM_HOMOCIT_SYNTH_2"/>
    <property type="match status" value="1"/>
</dbReference>
<dbReference type="PROSITE" id="PS50991">
    <property type="entry name" value="PYR_CT"/>
    <property type="match status" value="1"/>
</dbReference>
<keyword id="KW-0028">Amino-acid biosynthesis</keyword>
<keyword id="KW-0100">Branched-chain amino acid biosynthesis</keyword>
<keyword id="KW-0963">Cytoplasm</keyword>
<keyword id="KW-0432">Leucine biosynthesis</keyword>
<keyword id="KW-0464">Manganese</keyword>
<keyword id="KW-0479">Metal-binding</keyword>
<keyword id="KW-0808">Transferase</keyword>
<protein>
    <recommendedName>
        <fullName evidence="1">2-isopropylmalate synthase</fullName>
        <ecNumber evidence="1">2.3.3.13</ecNumber>
    </recommendedName>
    <alternativeName>
        <fullName evidence="1">Alpha-IPM synthase</fullName>
    </alternativeName>
    <alternativeName>
        <fullName evidence="1">Alpha-isopropylmalate synthase</fullName>
    </alternativeName>
</protein>
<evidence type="ECO:0000255" key="1">
    <source>
        <dbReference type="HAMAP-Rule" id="MF_01025"/>
    </source>
</evidence>
<name>LEU1_VIBVY</name>
<reference key="1">
    <citation type="journal article" date="2003" name="Genome Res.">
        <title>Comparative genome analysis of Vibrio vulnificus, a marine pathogen.</title>
        <authorList>
            <person name="Chen C.-Y."/>
            <person name="Wu K.-M."/>
            <person name="Chang Y.-C."/>
            <person name="Chang C.-H."/>
            <person name="Tsai H.-C."/>
            <person name="Liao T.-L."/>
            <person name="Liu Y.-M."/>
            <person name="Chen H.-J."/>
            <person name="Shen A.B.-T."/>
            <person name="Li J.-C."/>
            <person name="Su T.-L."/>
            <person name="Shao C.-P."/>
            <person name="Lee C.-T."/>
            <person name="Hor L.-I."/>
            <person name="Tsai S.-F."/>
        </authorList>
    </citation>
    <scope>NUCLEOTIDE SEQUENCE [LARGE SCALE GENOMIC DNA]</scope>
    <source>
        <strain>YJ016</strain>
    </source>
</reference>
<accession>Q7MP77</accession>
<gene>
    <name evidence="1" type="primary">leuA</name>
    <name type="ordered locus">VV0487</name>
</gene>
<feature type="chain" id="PRO_0000140398" description="2-isopropylmalate synthase">
    <location>
        <begin position="1"/>
        <end position="515"/>
    </location>
</feature>
<feature type="domain" description="Pyruvate carboxyltransferase" evidence="1">
    <location>
        <begin position="5"/>
        <end position="267"/>
    </location>
</feature>
<feature type="region of interest" description="Regulatory domain" evidence="1">
    <location>
        <begin position="392"/>
        <end position="515"/>
    </location>
</feature>
<feature type="binding site" evidence="1">
    <location>
        <position position="14"/>
    </location>
    <ligand>
        <name>Mn(2+)</name>
        <dbReference type="ChEBI" id="CHEBI:29035"/>
    </ligand>
</feature>
<feature type="binding site" evidence="1">
    <location>
        <position position="202"/>
    </location>
    <ligand>
        <name>Mn(2+)</name>
        <dbReference type="ChEBI" id="CHEBI:29035"/>
    </ligand>
</feature>
<feature type="binding site" evidence="1">
    <location>
        <position position="204"/>
    </location>
    <ligand>
        <name>Mn(2+)</name>
        <dbReference type="ChEBI" id="CHEBI:29035"/>
    </ligand>
</feature>
<feature type="binding site" evidence="1">
    <location>
        <position position="238"/>
    </location>
    <ligand>
        <name>Mn(2+)</name>
        <dbReference type="ChEBI" id="CHEBI:29035"/>
    </ligand>
</feature>
<organism>
    <name type="scientific">Vibrio vulnificus (strain YJ016)</name>
    <dbReference type="NCBI Taxonomy" id="196600"/>
    <lineage>
        <taxon>Bacteria</taxon>
        <taxon>Pseudomonadati</taxon>
        <taxon>Pseudomonadota</taxon>
        <taxon>Gammaproteobacteria</taxon>
        <taxon>Vibrionales</taxon>
        <taxon>Vibrionaceae</taxon>
        <taxon>Vibrio</taxon>
    </lineage>
</organism>
<comment type="function">
    <text evidence="1">Catalyzes the condensation of the acetyl group of acetyl-CoA with 3-methyl-2-oxobutanoate (2-ketoisovalerate) to form 3-carboxy-3-hydroxy-4-methylpentanoate (2-isopropylmalate).</text>
</comment>
<comment type="catalytic activity">
    <reaction evidence="1">
        <text>3-methyl-2-oxobutanoate + acetyl-CoA + H2O = (2S)-2-isopropylmalate + CoA + H(+)</text>
        <dbReference type="Rhea" id="RHEA:21524"/>
        <dbReference type="ChEBI" id="CHEBI:1178"/>
        <dbReference type="ChEBI" id="CHEBI:11851"/>
        <dbReference type="ChEBI" id="CHEBI:15377"/>
        <dbReference type="ChEBI" id="CHEBI:15378"/>
        <dbReference type="ChEBI" id="CHEBI:57287"/>
        <dbReference type="ChEBI" id="CHEBI:57288"/>
        <dbReference type="EC" id="2.3.3.13"/>
    </reaction>
</comment>
<comment type="cofactor">
    <cofactor evidence="1">
        <name>Mn(2+)</name>
        <dbReference type="ChEBI" id="CHEBI:29035"/>
    </cofactor>
</comment>
<comment type="pathway">
    <text evidence="1">Amino-acid biosynthesis; L-leucine biosynthesis; L-leucine from 3-methyl-2-oxobutanoate: step 1/4.</text>
</comment>
<comment type="subunit">
    <text evidence="1">Homodimer.</text>
</comment>
<comment type="subcellular location">
    <subcellularLocation>
        <location evidence="1">Cytoplasm</location>
    </subcellularLocation>
</comment>
<comment type="similarity">
    <text evidence="1">Belongs to the alpha-IPM synthase/homocitrate synthase family. LeuA type 1 subfamily.</text>
</comment>
<sequence length="515" mass="56419">MNDQVIIFDTTLRDGEQALSASLTVKEKLQIAYALERLGVDVIEAGFPVSSPGDFESVQTIARNIKNSRVCALSRAVEKDIDAAAEALKVAEAFRIHTFISTSTIHVQDKLRRSYDDVVEMGVRAVKHARKYTDDVEFSCEDAGRTPIDNLCRMVEAAINAGARTINIPDTVGYTVPSEFGGIIQTLFNRVPNIDKAIISVHCHDDLGMSVANSIAAVQAGARQVEGTINGIGERAGNCSLEEIAMIIKTRQELLGVRTGINHEEIHRTSKLVSQLCNMPIQANKAIVGANAFSHSSGIHQDGMLKNKNTYEIMTPESIGLKNQALNLTSRSGRAAVKSHMDAMGYKEDEYNLDALYQDFLKLADRKGQVFDYDLEALMHFSNLREEDDYYKLNYLSVQSGSVMATTSIKLLCGDEEKCEAAVGNGPVDALYQCIYRLTGYDIVLDKFDLTAKGEGEDGLGQADIIANYKGRKYHGTGISTDIVEASGQALLHVINSIHRADEIAEMKQKKIATV</sequence>